<organism>
    <name type="scientific">Oryctolagus cuniculus</name>
    <name type="common">Rabbit</name>
    <dbReference type="NCBI Taxonomy" id="9986"/>
    <lineage>
        <taxon>Eukaryota</taxon>
        <taxon>Metazoa</taxon>
        <taxon>Chordata</taxon>
        <taxon>Craniata</taxon>
        <taxon>Vertebrata</taxon>
        <taxon>Euteleostomi</taxon>
        <taxon>Mammalia</taxon>
        <taxon>Eutheria</taxon>
        <taxon>Euarchontoglires</taxon>
        <taxon>Glires</taxon>
        <taxon>Lagomorpha</taxon>
        <taxon>Leporidae</taxon>
        <taxon>Oryctolagus</taxon>
    </lineage>
</organism>
<keyword id="KW-0007">Acetylation</keyword>
<keyword id="KW-0030">Aminoacyl-tRNA synthetase</keyword>
<keyword id="KW-0067">ATP-binding</keyword>
<keyword id="KW-0963">Cytoplasm</keyword>
<keyword id="KW-0903">Direct protein sequencing</keyword>
<keyword id="KW-0238">DNA-binding</keyword>
<keyword id="KW-0436">Ligase</keyword>
<keyword id="KW-0547">Nucleotide-binding</keyword>
<keyword id="KW-0539">Nucleus</keyword>
<keyword id="KW-0597">Phosphoprotein</keyword>
<keyword id="KW-0648">Protein biosynthesis</keyword>
<keyword id="KW-1185">Reference proteome</keyword>
<accession>P13642</accession>
<accession>G1TXX6</accession>
<gene>
    <name type="primary">SARS1</name>
    <name type="synonym">SARS</name>
    <name type="synonym">SERS</name>
</gene>
<sequence length="514" mass="58891">MVLDLDLFRVDKGGDPALIRETQEKRFKDPGLVDQLVKADSEWRRCRFRADNLNKLKNLCSKTIGEKMKKKEPVGDDESIPENVLNFDDVTADTLTNLKVSQIKKVRLLIDEAILKCDAERIKLEAERFESLREIGNLLHPSVPISNDEDADNKVERIWGDCTVRKKYSHVDLVVMVDGFEGEKGAVVAGSRGYFLKGVLVFLEQALIQYALRTLRNRGYTPIYTPFFMRKEVMQEVAQLSQFDEELYKVIGKGSEKSDDNSYDEKYLIATSEQPIAALHRDEWLRPEDLPIKYAGLSTCFRQEVGSHGRDTRGIFRVHQFEKIEQFVYSSPHDNKSWEMFEEMIATAEEFYQSLGIPYHIVNIVSGSLNHAASKKLDLEAWFPGSGAFRELVSCSNCTDYQARRLRIRYGQTKKMMDKVEFVHMLNATMCATTRTICAILENYQTEKGIIVPEKLKEFMPPGLQELIPFVKPAPIDQEPSKKQKKQHEGSKKKAAARDVTLENRLQNMEVTDA</sequence>
<dbReference type="EC" id="6.1.1.11" evidence="1"/>
<dbReference type="EMBL" id="AAGW02000971">
    <property type="status" value="NOT_ANNOTATED_CDS"/>
    <property type="molecule type" value="Genomic_DNA"/>
</dbReference>
<dbReference type="EMBL" id="AAGW02000972">
    <property type="status" value="NOT_ANNOTATED_CDS"/>
    <property type="molecule type" value="Genomic_DNA"/>
</dbReference>
<dbReference type="PIR" id="S00490">
    <property type="entry name" value="S00490"/>
</dbReference>
<dbReference type="RefSeq" id="XP_002715855.1">
    <property type="nucleotide sequence ID" value="XM_002715809.5"/>
</dbReference>
<dbReference type="SMR" id="P13642"/>
<dbReference type="FunCoup" id="P13642">
    <property type="interactions" value="1993"/>
</dbReference>
<dbReference type="STRING" id="9986.ENSOCUP00000007455"/>
<dbReference type="PaxDb" id="9986-ENSOCUP00000007455"/>
<dbReference type="Ensembl" id="ENSOCUT00000026819.3">
    <property type="protein sequence ID" value="ENSOCUP00000021931.1"/>
    <property type="gene ID" value="ENSOCUG00000008625.4"/>
</dbReference>
<dbReference type="GeneID" id="100339002"/>
<dbReference type="KEGG" id="ocu:100339002"/>
<dbReference type="CTD" id="6301"/>
<dbReference type="eggNOG" id="KOG2509">
    <property type="taxonomic scope" value="Eukaryota"/>
</dbReference>
<dbReference type="GeneTree" id="ENSGT00940000153792"/>
<dbReference type="InParanoid" id="P13642"/>
<dbReference type="OrthoDB" id="10264585at2759"/>
<dbReference type="UniPathway" id="UPA00906">
    <property type="reaction ID" value="UER00895"/>
</dbReference>
<dbReference type="Proteomes" id="UP000001811">
    <property type="component" value="Chromosome 13"/>
</dbReference>
<dbReference type="Bgee" id="ENSOCUG00000008625">
    <property type="expression patterns" value="Expressed in autopod skin and 17 other cell types or tissues"/>
</dbReference>
<dbReference type="ExpressionAtlas" id="P13642">
    <property type="expression patterns" value="baseline"/>
</dbReference>
<dbReference type="GO" id="GO:0005737">
    <property type="term" value="C:cytoplasm"/>
    <property type="evidence" value="ECO:0000250"/>
    <property type="project" value="UniProtKB"/>
</dbReference>
<dbReference type="GO" id="GO:0005829">
    <property type="term" value="C:cytosol"/>
    <property type="evidence" value="ECO:0000250"/>
    <property type="project" value="UniProtKB"/>
</dbReference>
<dbReference type="GO" id="GO:0005634">
    <property type="term" value="C:nucleus"/>
    <property type="evidence" value="ECO:0000250"/>
    <property type="project" value="UniProtKB"/>
</dbReference>
<dbReference type="GO" id="GO:0005524">
    <property type="term" value="F:ATP binding"/>
    <property type="evidence" value="ECO:0007669"/>
    <property type="project" value="UniProtKB-KW"/>
</dbReference>
<dbReference type="GO" id="GO:0000978">
    <property type="term" value="F:RNA polymerase II cis-regulatory region sequence-specific DNA binding"/>
    <property type="evidence" value="ECO:0000250"/>
    <property type="project" value="UniProtKB"/>
</dbReference>
<dbReference type="GO" id="GO:0098619">
    <property type="term" value="F:selenocysteine-tRNA ligase activity"/>
    <property type="evidence" value="ECO:0000250"/>
    <property type="project" value="UniProtKB"/>
</dbReference>
<dbReference type="GO" id="GO:0004828">
    <property type="term" value="F:serine-tRNA ligase activity"/>
    <property type="evidence" value="ECO:0000250"/>
    <property type="project" value="UniProtKB"/>
</dbReference>
<dbReference type="GO" id="GO:0002181">
    <property type="term" value="P:cytoplasmic translation"/>
    <property type="evidence" value="ECO:0000250"/>
    <property type="project" value="UniProtKB"/>
</dbReference>
<dbReference type="GO" id="GO:0016525">
    <property type="term" value="P:negative regulation of angiogenesis"/>
    <property type="evidence" value="ECO:0000250"/>
    <property type="project" value="UniProtKB"/>
</dbReference>
<dbReference type="GO" id="GO:0000122">
    <property type="term" value="P:negative regulation of transcription by RNA polymerase II"/>
    <property type="evidence" value="ECO:0000250"/>
    <property type="project" value="UniProtKB"/>
</dbReference>
<dbReference type="GO" id="GO:1904046">
    <property type="term" value="P:negative regulation of vascular endothelial growth factor production"/>
    <property type="evidence" value="ECO:0000250"/>
    <property type="project" value="UniProtKB"/>
</dbReference>
<dbReference type="GO" id="GO:0001514">
    <property type="term" value="P:selenocysteine incorporation"/>
    <property type="evidence" value="ECO:0000250"/>
    <property type="project" value="UniProtKB"/>
</dbReference>
<dbReference type="GO" id="GO:0006434">
    <property type="term" value="P:seryl-tRNA aminoacylation"/>
    <property type="evidence" value="ECO:0000250"/>
    <property type="project" value="UniProtKB"/>
</dbReference>
<dbReference type="CDD" id="cd00770">
    <property type="entry name" value="SerRS_core"/>
    <property type="match status" value="1"/>
</dbReference>
<dbReference type="FunFam" id="1.10.287.40:FF:000002">
    <property type="entry name" value="Serine--tRNA ligase, cytoplasmic"/>
    <property type="match status" value="1"/>
</dbReference>
<dbReference type="FunFam" id="3.30.930.10:FF:000027">
    <property type="entry name" value="Serine--tRNA ligase, cytoplasmic"/>
    <property type="match status" value="1"/>
</dbReference>
<dbReference type="Gene3D" id="3.30.930.10">
    <property type="entry name" value="Bira Bifunctional Protein, Domain 2"/>
    <property type="match status" value="1"/>
</dbReference>
<dbReference type="Gene3D" id="1.10.287.40">
    <property type="entry name" value="Serine-tRNA synthetase, tRNA binding domain"/>
    <property type="match status" value="1"/>
</dbReference>
<dbReference type="InterPro" id="IPR002314">
    <property type="entry name" value="aa-tRNA-synt_IIb"/>
</dbReference>
<dbReference type="InterPro" id="IPR006195">
    <property type="entry name" value="aa-tRNA-synth_II"/>
</dbReference>
<dbReference type="InterPro" id="IPR045864">
    <property type="entry name" value="aa-tRNA-synth_II/BPL/LPL"/>
</dbReference>
<dbReference type="InterPro" id="IPR002317">
    <property type="entry name" value="Ser-tRNA-ligase_type_1"/>
</dbReference>
<dbReference type="InterPro" id="IPR015866">
    <property type="entry name" value="Ser-tRNA-synth_1_N"/>
</dbReference>
<dbReference type="InterPro" id="IPR042103">
    <property type="entry name" value="SerRS_1_N_sf"/>
</dbReference>
<dbReference type="InterPro" id="IPR033729">
    <property type="entry name" value="SerRS_core"/>
</dbReference>
<dbReference type="InterPro" id="IPR010978">
    <property type="entry name" value="tRNA-bd_arm"/>
</dbReference>
<dbReference type="NCBIfam" id="TIGR00414">
    <property type="entry name" value="serS"/>
    <property type="match status" value="1"/>
</dbReference>
<dbReference type="PANTHER" id="PTHR11778">
    <property type="entry name" value="SERYL-TRNA SYNTHETASE"/>
    <property type="match status" value="1"/>
</dbReference>
<dbReference type="Pfam" id="PF02403">
    <property type="entry name" value="Seryl_tRNA_N"/>
    <property type="match status" value="1"/>
</dbReference>
<dbReference type="Pfam" id="PF00587">
    <property type="entry name" value="tRNA-synt_2b"/>
    <property type="match status" value="1"/>
</dbReference>
<dbReference type="PIRSF" id="PIRSF001529">
    <property type="entry name" value="Ser-tRNA-synth_IIa"/>
    <property type="match status" value="1"/>
</dbReference>
<dbReference type="PRINTS" id="PR00981">
    <property type="entry name" value="TRNASYNTHSER"/>
</dbReference>
<dbReference type="SUPFAM" id="SSF55681">
    <property type="entry name" value="Class II aaRS and biotin synthetases"/>
    <property type="match status" value="1"/>
</dbReference>
<dbReference type="SUPFAM" id="SSF46589">
    <property type="entry name" value="tRNA-binding arm"/>
    <property type="match status" value="1"/>
</dbReference>
<dbReference type="PROSITE" id="PS50862">
    <property type="entry name" value="AA_TRNA_LIGASE_II"/>
    <property type="match status" value="1"/>
</dbReference>
<protein>
    <recommendedName>
        <fullName>Serine--tRNA ligase, cytoplasmic</fullName>
        <ecNumber evidence="1">6.1.1.11</ecNumber>
    </recommendedName>
    <alternativeName>
        <fullName>62 kDa RNA-binding protein</fullName>
    </alternativeName>
    <alternativeName>
        <fullName>Seryl-tRNA synthetase</fullName>
        <shortName>SerRS</shortName>
    </alternativeName>
    <alternativeName>
        <fullName>Seryl-tRNA(Ser/Sec) synthetase</fullName>
    </alternativeName>
</protein>
<name>SYSC_RABIT</name>
<evidence type="ECO:0000250" key="1">
    <source>
        <dbReference type="UniProtKB" id="P49591"/>
    </source>
</evidence>
<evidence type="ECO:0000256" key="2">
    <source>
        <dbReference type="SAM" id="MobiDB-lite"/>
    </source>
</evidence>
<evidence type="ECO:0000305" key="3"/>
<evidence type="ECO:0000305" key="4">
    <source>
    </source>
</evidence>
<evidence type="ECO:0000312" key="5">
    <source>
        <dbReference type="Proteomes" id="UP000001811"/>
    </source>
</evidence>
<proteinExistence type="evidence at protein level"/>
<comment type="function">
    <text evidence="1">Catalyzes the attachment of serine to tRNA(Ser) in a two-step reaction: serine is first activated by ATP to form Ser-AMP and then transferred to the acceptor end of tRNA(Ser). Is probably also able to aminoacylate tRNA(Sec) with serine, to form the misacylated tRNA L-seryl-tRNA(Sec), which will be further converted into selenocysteinyl-tRNA(Sec). In the nucleus, binds to the VEGFA core promoter and prevents MYC binding and transcriptional activation by MYC. Recruits SIRT2 to the VEGFA promoter, promoting deacetylation of histone H4 at 'Lys-16' (H4K16). Thereby, inhibits the production of VEGFA and sprouting angiogenesis mediated by VEGFA.</text>
</comment>
<comment type="catalytic activity">
    <reaction evidence="1">
        <text>tRNA(Ser) + L-serine + ATP = L-seryl-tRNA(Ser) + AMP + diphosphate + H(+)</text>
        <dbReference type="Rhea" id="RHEA:12292"/>
        <dbReference type="Rhea" id="RHEA-COMP:9669"/>
        <dbReference type="Rhea" id="RHEA-COMP:9703"/>
        <dbReference type="ChEBI" id="CHEBI:15378"/>
        <dbReference type="ChEBI" id="CHEBI:30616"/>
        <dbReference type="ChEBI" id="CHEBI:33019"/>
        <dbReference type="ChEBI" id="CHEBI:33384"/>
        <dbReference type="ChEBI" id="CHEBI:78442"/>
        <dbReference type="ChEBI" id="CHEBI:78533"/>
        <dbReference type="ChEBI" id="CHEBI:456215"/>
        <dbReference type="EC" id="6.1.1.11"/>
    </reaction>
</comment>
<comment type="catalytic activity">
    <reaction evidence="1">
        <text>tRNA(Sec) + L-serine + ATP = L-seryl-tRNA(Sec) + AMP + diphosphate + H(+)</text>
        <dbReference type="Rhea" id="RHEA:42580"/>
        <dbReference type="Rhea" id="RHEA-COMP:9742"/>
        <dbReference type="Rhea" id="RHEA-COMP:10128"/>
        <dbReference type="ChEBI" id="CHEBI:15378"/>
        <dbReference type="ChEBI" id="CHEBI:30616"/>
        <dbReference type="ChEBI" id="CHEBI:33019"/>
        <dbReference type="ChEBI" id="CHEBI:33384"/>
        <dbReference type="ChEBI" id="CHEBI:78442"/>
        <dbReference type="ChEBI" id="CHEBI:78533"/>
        <dbReference type="ChEBI" id="CHEBI:456215"/>
        <dbReference type="EC" id="6.1.1.11"/>
    </reaction>
</comment>
<comment type="pathway">
    <text>Aminoacyl-tRNA biosynthesis; selenocysteinyl-tRNA(Sec) biosynthesis; L-seryl-tRNA(Sec) from L-serine and tRNA(Sec): step 1/1.</text>
</comment>
<comment type="subunit">
    <text evidence="1">Homodimer. The tRNA molecule may bind across the dimer. Interacts with SIRT2. Interacts with METTL6; interaction is required for the tRNA N(3)-methylcytidine methyltransferase activity of METTL6.</text>
</comment>
<comment type="subcellular location">
    <subcellularLocation>
        <location evidence="1">Cytoplasm</location>
    </subcellularLocation>
    <subcellularLocation>
        <location evidence="1">Nucleus</location>
    </subcellularLocation>
    <text evidence="1">Predominantly cytoplasmic, but a minor proportion is also found in the nucleus.</text>
</comment>
<comment type="domain">
    <text evidence="1">Consists of two distinct domains, a catalytic core and a N-terminal extension that is involved in tRNA binding.</text>
</comment>
<comment type="similarity">
    <text evidence="3">Belongs to the class-II aminoacyl-tRNA synthetase family. Type-1 seryl-tRNA synthetase subfamily.</text>
</comment>
<comment type="caution">
    <text evidence="4">Was originally thought to function in mRNA expression.</text>
</comment>
<reference evidence="5" key="1">
    <citation type="journal article" date="2011" name="Nature">
        <title>A high-resolution map of human evolutionary constraint using 29 mammals.</title>
        <authorList>
            <person name="Lindblad-Toh K."/>
            <person name="Garber M."/>
            <person name="Zuk O."/>
            <person name="Lin M.F."/>
            <person name="Parker B.J."/>
            <person name="Washietl S."/>
            <person name="Kheradpour P."/>
            <person name="Ernst J."/>
            <person name="Jordan G."/>
            <person name="Mauceli E."/>
            <person name="Ward L.D."/>
            <person name="Lowe C.B."/>
            <person name="Holloway A.K."/>
            <person name="Clamp M."/>
            <person name="Gnerre S."/>
            <person name="Alfoldi J."/>
            <person name="Beal K."/>
            <person name="Chang J."/>
            <person name="Clawson H."/>
            <person name="Cuff J."/>
            <person name="Di Palma F."/>
            <person name="Fitzgerald S."/>
            <person name="Flicek P."/>
            <person name="Guttman M."/>
            <person name="Hubisz M.J."/>
            <person name="Jaffe D.B."/>
            <person name="Jungreis I."/>
            <person name="Kent W.J."/>
            <person name="Kostka D."/>
            <person name="Lara M."/>
            <person name="Martins A.L."/>
            <person name="Massingham T."/>
            <person name="Moltke I."/>
            <person name="Raney B.J."/>
            <person name="Rasmussen M.D."/>
            <person name="Robinson J."/>
            <person name="Stark A."/>
            <person name="Vilella A.J."/>
            <person name="Wen J."/>
            <person name="Xie X."/>
            <person name="Zody M.C."/>
            <person name="Baldwin J."/>
            <person name="Bloom T."/>
            <person name="Chin C.W."/>
            <person name="Heiman D."/>
            <person name="Nicol R."/>
            <person name="Nusbaum C."/>
            <person name="Young S."/>
            <person name="Wilkinson J."/>
            <person name="Worley K.C."/>
            <person name="Kovar C.L."/>
            <person name="Muzny D.M."/>
            <person name="Gibbs R.A."/>
            <person name="Cree A."/>
            <person name="Dihn H.H."/>
            <person name="Fowler G."/>
            <person name="Jhangiani S."/>
            <person name="Joshi V."/>
            <person name="Lee S."/>
            <person name="Lewis L.R."/>
            <person name="Nazareth L.V."/>
            <person name="Okwuonu G."/>
            <person name="Santibanez J."/>
            <person name="Warren W.C."/>
            <person name="Mardis E.R."/>
            <person name="Weinstock G.M."/>
            <person name="Wilson R.K."/>
            <person name="Delehaunty K."/>
            <person name="Dooling D."/>
            <person name="Fronik C."/>
            <person name="Fulton L."/>
            <person name="Fulton B."/>
            <person name="Graves T."/>
            <person name="Minx P."/>
            <person name="Sodergren E."/>
            <person name="Birney E."/>
            <person name="Margulies E.H."/>
            <person name="Herrero J."/>
            <person name="Green E.D."/>
            <person name="Haussler D."/>
            <person name="Siepel A."/>
            <person name="Goldman N."/>
            <person name="Pollard K.S."/>
            <person name="Pedersen J.S."/>
            <person name="Lander E.S."/>
            <person name="Kellis M."/>
        </authorList>
    </citation>
    <scope>NUCLEOTIDE SEQUENCE [LARGE SCALE GENOMIC DNA]</scope>
    <source>
        <strain evidence="5">Thorbecke</strain>
    </source>
</reference>
<reference key="2">
    <citation type="journal article" date="1988" name="Eur. J. Biochem.">
        <title>Purification and properties of a protein component of messenger ribonucleoprotein particles that shares a common epitope with eucaryotic elongation factor Tu.</title>
        <authorList>
            <person name="Slobin L.I."/>
            <person name="Greenberg J.R."/>
        </authorList>
    </citation>
    <scope>PROTEIN SEQUENCE OF 2-40</scope>
</reference>
<feature type="chain" id="PRO_0000122193" description="Serine--tRNA ligase, cytoplasmic">
    <location>
        <begin position="1"/>
        <end position="514"/>
    </location>
</feature>
<feature type="region of interest" description="Interaction with tRNA" evidence="1">
    <location>
        <begin position="9"/>
        <end position="61"/>
    </location>
</feature>
<feature type="region of interest" description="Disordered" evidence="2">
    <location>
        <begin position="472"/>
        <end position="514"/>
    </location>
</feature>
<feature type="short sequence motif" description="Nuclear localization signal" evidence="1">
    <location>
        <begin position="482"/>
        <end position="494"/>
    </location>
</feature>
<feature type="compositionally biased region" description="Basic and acidic residues" evidence="2">
    <location>
        <begin position="479"/>
        <end position="502"/>
    </location>
</feature>
<feature type="compositionally biased region" description="Polar residues" evidence="2">
    <location>
        <begin position="504"/>
        <end position="514"/>
    </location>
</feature>
<feature type="binding site" evidence="1">
    <location>
        <position position="271"/>
    </location>
    <ligand>
        <name>L-serine</name>
        <dbReference type="ChEBI" id="CHEBI:33384"/>
    </ligand>
</feature>
<feature type="binding site" evidence="1">
    <location>
        <begin position="302"/>
        <end position="304"/>
    </location>
    <ligand>
        <name>ATP</name>
        <dbReference type="ChEBI" id="CHEBI:30616"/>
    </ligand>
</feature>
<feature type="binding site" evidence="1">
    <location>
        <position position="302"/>
    </location>
    <ligand>
        <name>L-serine</name>
        <dbReference type="ChEBI" id="CHEBI:33384"/>
    </ligand>
</feature>
<feature type="binding site" evidence="1">
    <location>
        <begin position="318"/>
        <end position="321"/>
    </location>
    <ligand>
        <name>ATP</name>
        <dbReference type="ChEBI" id="CHEBI:30616"/>
    </ligand>
</feature>
<feature type="binding site" evidence="1">
    <location>
        <position position="325"/>
    </location>
    <ligand>
        <name>L-serine</name>
        <dbReference type="ChEBI" id="CHEBI:33384"/>
    </ligand>
</feature>
<feature type="binding site" evidence="1">
    <location>
        <begin position="391"/>
        <end position="394"/>
    </location>
    <ligand>
        <name>ATP</name>
        <dbReference type="ChEBI" id="CHEBI:30616"/>
    </ligand>
</feature>
<feature type="binding site" evidence="1">
    <location>
        <position position="427"/>
    </location>
    <ligand>
        <name>L-serine</name>
        <dbReference type="ChEBI" id="CHEBI:33384"/>
    </ligand>
</feature>
<feature type="site" description="Important for serine binding" evidence="1">
    <location>
        <position position="429"/>
    </location>
</feature>
<feature type="modified residue" description="N-acetylmethionine" evidence="1">
    <location>
        <position position="1"/>
    </location>
</feature>
<feature type="modified residue" description="Phosphoserine" evidence="1">
    <location>
        <position position="241"/>
    </location>
</feature>
<feature type="modified residue" description="N6-acetyllysine" evidence="1">
    <location>
        <position position="323"/>
    </location>
</feature>